<comment type="function">
    <text evidence="1">Component of the FACT complex, a general chromatin factor that acts to reorganize nucleosomes. The FACT complex is involved in multiple processes that require DNA as a template such as mRNA elongation, DNA replication and DNA repair. During transcription elongation the FACT complex acts as a histone chaperone that both destabilizes and restores nucleosomal structure. It facilitates the passage of RNA polymerase II and transcription by promoting the dissociation of one histone H2A-H2B dimer from the nucleosome, then subsequently promotes the reestablishment of the nucleosome following the passage of RNA polymerase II (By similarity).</text>
</comment>
<comment type="subunit">
    <text evidence="1">Forms a stable heterodimer with POB3. The SPT16-POB3 dimer weakly associates with multiple molecules of NHP6 to form the FACT complex (By similarity).</text>
</comment>
<comment type="subcellular location">
    <subcellularLocation>
        <location evidence="1">Nucleus</location>
    </subcellularLocation>
    <subcellularLocation>
        <location evidence="1">Chromosome</location>
    </subcellularLocation>
</comment>
<comment type="similarity">
    <text evidence="4">Belongs to the peptidase M24 family. SPT16 subfamily.</text>
</comment>
<comment type="caution">
    <text evidence="4">Although related to the peptidase M24 family, this protein lacks conserved active site residues suggesting that it may lack peptidase activity.</text>
</comment>
<reference key="1">
    <citation type="journal article" date="2004" name="Nature">
        <title>Genome evolution in yeasts.</title>
        <authorList>
            <person name="Dujon B."/>
            <person name="Sherman D."/>
            <person name="Fischer G."/>
            <person name="Durrens P."/>
            <person name="Casaregola S."/>
            <person name="Lafontaine I."/>
            <person name="de Montigny J."/>
            <person name="Marck C."/>
            <person name="Neuveglise C."/>
            <person name="Talla E."/>
            <person name="Goffard N."/>
            <person name="Frangeul L."/>
            <person name="Aigle M."/>
            <person name="Anthouard V."/>
            <person name="Babour A."/>
            <person name="Barbe V."/>
            <person name="Barnay S."/>
            <person name="Blanchin S."/>
            <person name="Beckerich J.-M."/>
            <person name="Beyne E."/>
            <person name="Bleykasten C."/>
            <person name="Boisrame A."/>
            <person name="Boyer J."/>
            <person name="Cattolico L."/>
            <person name="Confanioleri F."/>
            <person name="de Daruvar A."/>
            <person name="Despons L."/>
            <person name="Fabre E."/>
            <person name="Fairhead C."/>
            <person name="Ferry-Dumazet H."/>
            <person name="Groppi A."/>
            <person name="Hantraye F."/>
            <person name="Hennequin C."/>
            <person name="Jauniaux N."/>
            <person name="Joyet P."/>
            <person name="Kachouri R."/>
            <person name="Kerrest A."/>
            <person name="Koszul R."/>
            <person name="Lemaire M."/>
            <person name="Lesur I."/>
            <person name="Ma L."/>
            <person name="Muller H."/>
            <person name="Nicaud J.-M."/>
            <person name="Nikolski M."/>
            <person name="Oztas S."/>
            <person name="Ozier-Kalogeropoulos O."/>
            <person name="Pellenz S."/>
            <person name="Potier S."/>
            <person name="Richard G.-F."/>
            <person name="Straub M.-L."/>
            <person name="Suleau A."/>
            <person name="Swennen D."/>
            <person name="Tekaia F."/>
            <person name="Wesolowski-Louvel M."/>
            <person name="Westhof E."/>
            <person name="Wirth B."/>
            <person name="Zeniou-Meyer M."/>
            <person name="Zivanovic Y."/>
            <person name="Bolotin-Fukuhara M."/>
            <person name="Thierry A."/>
            <person name="Bouchier C."/>
            <person name="Caudron B."/>
            <person name="Scarpelli C."/>
            <person name="Gaillardin C."/>
            <person name="Weissenbach J."/>
            <person name="Wincker P."/>
            <person name="Souciet J.-L."/>
        </authorList>
    </citation>
    <scope>NUCLEOTIDE SEQUENCE [LARGE SCALE GENOMIC DNA]</scope>
    <source>
        <strain>ATCC 2001 / BCRC 20586 / JCM 3761 / NBRC 0622 / NRRL Y-65 / CBS 138</strain>
    </source>
</reference>
<name>SPT16_CANGA</name>
<accession>Q6FWT4</accession>
<organism>
    <name type="scientific">Candida glabrata (strain ATCC 2001 / BCRC 20586 / JCM 3761 / NBRC 0622 / NRRL Y-65 / CBS 138)</name>
    <name type="common">Yeast</name>
    <name type="synonym">Nakaseomyces glabratus</name>
    <dbReference type="NCBI Taxonomy" id="284593"/>
    <lineage>
        <taxon>Eukaryota</taxon>
        <taxon>Fungi</taxon>
        <taxon>Dikarya</taxon>
        <taxon>Ascomycota</taxon>
        <taxon>Saccharomycotina</taxon>
        <taxon>Saccharomycetes</taxon>
        <taxon>Saccharomycetales</taxon>
        <taxon>Saccharomycetaceae</taxon>
        <taxon>Nakaseomyces</taxon>
    </lineage>
</organism>
<proteinExistence type="inferred from homology"/>
<evidence type="ECO:0000250" key="1"/>
<evidence type="ECO:0000255" key="2"/>
<evidence type="ECO:0000256" key="3">
    <source>
        <dbReference type="SAM" id="MobiDB-lite"/>
    </source>
</evidence>
<evidence type="ECO:0000305" key="4"/>
<dbReference type="EMBL" id="CR380949">
    <property type="protein sequence ID" value="CAG58216.1"/>
    <property type="molecule type" value="Genomic_DNA"/>
</dbReference>
<dbReference type="RefSeq" id="XP_445310.1">
    <property type="nucleotide sequence ID" value="XM_445310.1"/>
</dbReference>
<dbReference type="SMR" id="Q6FWT4"/>
<dbReference type="FunCoup" id="Q6FWT4">
    <property type="interactions" value="1525"/>
</dbReference>
<dbReference type="STRING" id="284593.Q6FWT4"/>
<dbReference type="EnsemblFungi" id="CAGL0C03047g-T">
    <property type="protein sequence ID" value="CAGL0C03047g-T-p1"/>
    <property type="gene ID" value="CAGL0C03047g"/>
</dbReference>
<dbReference type="KEGG" id="cgr:2886759"/>
<dbReference type="CGD" id="CAL0127194">
    <property type="gene designation" value="CAGL0C03047g"/>
</dbReference>
<dbReference type="VEuPathDB" id="FungiDB:CAGL0C03047g"/>
<dbReference type="eggNOG" id="KOG1189">
    <property type="taxonomic scope" value="Eukaryota"/>
</dbReference>
<dbReference type="HOGENOM" id="CLU_004627_1_0_1"/>
<dbReference type="InParanoid" id="Q6FWT4"/>
<dbReference type="OMA" id="YHINTIP"/>
<dbReference type="Proteomes" id="UP000002428">
    <property type="component" value="Chromosome C"/>
</dbReference>
<dbReference type="GO" id="GO:0035101">
    <property type="term" value="C:FACT complex"/>
    <property type="evidence" value="ECO:0007669"/>
    <property type="project" value="EnsemblFungi"/>
</dbReference>
<dbReference type="GO" id="GO:0042393">
    <property type="term" value="F:histone binding"/>
    <property type="evidence" value="ECO:0007669"/>
    <property type="project" value="EnsemblFungi"/>
</dbReference>
<dbReference type="GO" id="GO:0140713">
    <property type="term" value="F:histone chaperone activity"/>
    <property type="evidence" value="ECO:0007669"/>
    <property type="project" value="EnsemblFungi"/>
</dbReference>
<dbReference type="GO" id="GO:0031491">
    <property type="term" value="F:nucleosome binding"/>
    <property type="evidence" value="ECO:0007669"/>
    <property type="project" value="EnsemblFungi"/>
</dbReference>
<dbReference type="GO" id="GO:0140719">
    <property type="term" value="P:constitutive heterochromatin formation"/>
    <property type="evidence" value="ECO:0007669"/>
    <property type="project" value="EnsemblFungi"/>
</dbReference>
<dbReference type="GO" id="GO:0006281">
    <property type="term" value="P:DNA repair"/>
    <property type="evidence" value="ECO:0007669"/>
    <property type="project" value="UniProtKB-KW"/>
</dbReference>
<dbReference type="GO" id="GO:0006261">
    <property type="term" value="P:DNA-templated DNA replication"/>
    <property type="evidence" value="ECO:0007669"/>
    <property type="project" value="EnsemblFungi"/>
</dbReference>
<dbReference type="GO" id="GO:0006334">
    <property type="term" value="P:nucleosome assembly"/>
    <property type="evidence" value="ECO:0007669"/>
    <property type="project" value="EnsemblFungi"/>
</dbReference>
<dbReference type="GO" id="GO:0045899">
    <property type="term" value="P:positive regulation of RNA polymerase II transcription preinitiation complex assembly"/>
    <property type="evidence" value="ECO:0007669"/>
    <property type="project" value="EnsemblFungi"/>
</dbReference>
<dbReference type="GO" id="GO:0007063">
    <property type="term" value="P:regulation of sister chromatid cohesion"/>
    <property type="evidence" value="ECO:0007669"/>
    <property type="project" value="EnsemblFungi"/>
</dbReference>
<dbReference type="GO" id="GO:0006368">
    <property type="term" value="P:transcription elongation by RNA polymerase II"/>
    <property type="evidence" value="ECO:0007669"/>
    <property type="project" value="TreeGrafter"/>
</dbReference>
<dbReference type="FunFam" id="2.30.29.150:FF:000002">
    <property type="entry name" value="FACT complex subunit SPT16"/>
    <property type="match status" value="1"/>
</dbReference>
<dbReference type="FunFam" id="2.30.29.30:FF:000017">
    <property type="entry name" value="FACT complex subunit SPT16"/>
    <property type="match status" value="1"/>
</dbReference>
<dbReference type="FunFam" id="3.40.350.10:FF:000006">
    <property type="entry name" value="FACT complex subunit SPT16"/>
    <property type="match status" value="1"/>
</dbReference>
<dbReference type="FunFam" id="2.30.29.210:FF:000001">
    <property type="entry name" value="FACT complex subunit spt16"/>
    <property type="match status" value="1"/>
</dbReference>
<dbReference type="FunFam" id="3.90.230.10:FF:000005">
    <property type="entry name" value="FACT complex subunit spt16"/>
    <property type="match status" value="1"/>
</dbReference>
<dbReference type="Gene3D" id="2.30.29.150">
    <property type="match status" value="1"/>
</dbReference>
<dbReference type="Gene3D" id="3.90.230.10">
    <property type="entry name" value="Creatinase/methionine aminopeptidase superfamily"/>
    <property type="match status" value="1"/>
</dbReference>
<dbReference type="Gene3D" id="3.40.350.10">
    <property type="entry name" value="Creatinase/prolidase N-terminal domain"/>
    <property type="match status" value="1"/>
</dbReference>
<dbReference type="Gene3D" id="2.30.29.210">
    <property type="entry name" value="FACT complex subunit Spt16p/Cdc68p"/>
    <property type="match status" value="1"/>
</dbReference>
<dbReference type="Gene3D" id="2.30.29.30">
    <property type="entry name" value="Pleckstrin-homology domain (PH domain)/Phosphotyrosine-binding domain (PTB)"/>
    <property type="match status" value="1"/>
</dbReference>
<dbReference type="InterPro" id="IPR029149">
    <property type="entry name" value="Creatin/AminoP/Spt16_N"/>
</dbReference>
<dbReference type="InterPro" id="IPR036005">
    <property type="entry name" value="Creatinase/aminopeptidase-like"/>
</dbReference>
<dbReference type="InterPro" id="IPR029148">
    <property type="entry name" value="FACT-SPT16_Nlobe"/>
</dbReference>
<dbReference type="InterPro" id="IPR056595">
    <property type="entry name" value="Fact-SPT16_PH"/>
</dbReference>
<dbReference type="InterPro" id="IPR048969">
    <property type="entry name" value="FACT_SPT16_C"/>
</dbReference>
<dbReference type="InterPro" id="IPR013953">
    <property type="entry name" value="FACT_SPT16_M"/>
</dbReference>
<dbReference type="InterPro" id="IPR000994">
    <property type="entry name" value="Pept_M24"/>
</dbReference>
<dbReference type="InterPro" id="IPR011993">
    <property type="entry name" value="PH-like_dom_sf"/>
</dbReference>
<dbReference type="InterPro" id="IPR013719">
    <property type="entry name" value="RTT106/SPT16-like_middle_dom"/>
</dbReference>
<dbReference type="InterPro" id="IPR040258">
    <property type="entry name" value="Spt16"/>
</dbReference>
<dbReference type="PANTHER" id="PTHR13980">
    <property type="entry name" value="CDC68 RELATED"/>
    <property type="match status" value="1"/>
</dbReference>
<dbReference type="PANTHER" id="PTHR13980:SF15">
    <property type="entry name" value="FACT COMPLEX SUBUNIT SPT16"/>
    <property type="match status" value="1"/>
</dbReference>
<dbReference type="Pfam" id="PF14826">
    <property type="entry name" value="FACT-Spt16_Nlob"/>
    <property type="match status" value="1"/>
</dbReference>
<dbReference type="Pfam" id="PF00557">
    <property type="entry name" value="Peptidase_M24"/>
    <property type="match status" value="1"/>
</dbReference>
<dbReference type="Pfam" id="PF24824">
    <property type="entry name" value="PH_SPT16"/>
    <property type="match status" value="1"/>
</dbReference>
<dbReference type="Pfam" id="PF08512">
    <property type="entry name" value="Rttp106-like_middle"/>
    <property type="match status" value="1"/>
</dbReference>
<dbReference type="Pfam" id="PF08644">
    <property type="entry name" value="SPT16"/>
    <property type="match status" value="1"/>
</dbReference>
<dbReference type="Pfam" id="PF21091">
    <property type="entry name" value="SPT16_C"/>
    <property type="match status" value="1"/>
</dbReference>
<dbReference type="SMART" id="SM01285">
    <property type="entry name" value="FACT-Spt16_Nlob"/>
    <property type="match status" value="1"/>
</dbReference>
<dbReference type="SMART" id="SM01287">
    <property type="entry name" value="Rtt106"/>
    <property type="match status" value="1"/>
</dbReference>
<dbReference type="SMART" id="SM01286">
    <property type="entry name" value="SPT16"/>
    <property type="match status" value="1"/>
</dbReference>
<dbReference type="SUPFAM" id="SSF55920">
    <property type="entry name" value="Creatinase/aminopeptidase"/>
    <property type="match status" value="1"/>
</dbReference>
<protein>
    <recommendedName>
        <fullName>FACT complex subunit SPT16</fullName>
    </recommendedName>
    <alternativeName>
        <fullName>Facilitates chromatin transcription complex subunit SPT16</fullName>
    </alternativeName>
</protein>
<keyword id="KW-0158">Chromosome</keyword>
<keyword id="KW-0175">Coiled coil</keyword>
<keyword id="KW-0227">DNA damage</keyword>
<keyword id="KW-0234">DNA repair</keyword>
<keyword id="KW-0235">DNA replication</keyword>
<keyword id="KW-0539">Nucleus</keyword>
<keyword id="KW-1185">Reference proteome</keyword>
<keyword id="KW-0804">Transcription</keyword>
<keyword id="KW-0805">Transcription regulation</keyword>
<feature type="chain" id="PRO_0000245182" description="FACT complex subunit SPT16">
    <location>
        <begin position="1"/>
        <end position="1027"/>
    </location>
</feature>
<feature type="region of interest" description="Disordered" evidence="3">
    <location>
        <begin position="767"/>
        <end position="790"/>
    </location>
</feature>
<feature type="region of interest" description="Disordered" evidence="3">
    <location>
        <begin position="952"/>
        <end position="1027"/>
    </location>
</feature>
<feature type="coiled-coil region" evidence="2">
    <location>
        <begin position="8"/>
        <end position="28"/>
    </location>
</feature>
<feature type="coiled-coil region" evidence="2">
    <location>
        <begin position="82"/>
        <end position="102"/>
    </location>
</feature>
<feature type="coiled-coil region" evidence="2">
    <location>
        <begin position="208"/>
        <end position="233"/>
    </location>
</feature>
<feature type="coiled-coil region" evidence="2">
    <location>
        <begin position="484"/>
        <end position="507"/>
    </location>
</feature>
<feature type="coiled-coil region" evidence="2">
    <location>
        <begin position="637"/>
        <end position="658"/>
    </location>
</feature>
<feature type="compositionally biased region" description="Acidic residues" evidence="3">
    <location>
        <begin position="953"/>
        <end position="992"/>
    </location>
</feature>
<feature type="compositionally biased region" description="Acidic residues" evidence="3">
    <location>
        <begin position="1000"/>
        <end position="1011"/>
    </location>
</feature>
<feature type="compositionally biased region" description="Basic and acidic residues" evidence="3">
    <location>
        <begin position="1012"/>
        <end position="1027"/>
    </location>
</feature>
<sequence>MSELNIDAEAFKARVELLHGKYREFENEPNSMVFALGSSNPENPYQKTTALHYWLMGYEFPATLIVFTPGKVVIITSGPKAKHLEKVVELFKNNNNGVELEIWQRNNKDVEHSQKLFKDIIELINTAGKTVGIPEKDVYEGKFMKEWKPIWDAAIKEHEFKLVDISAGLSSTWEVKDDKEKAYISIASKCSDRFMNLLSDEMVRAVDDELKITNSKLSDKIENKIDDLKFLKKITNDLSAMCPPNHKFTLDLLDWTYSPIIQSGNKFDLRVSAHSNNDQLHGNGCILASCGIRYNNYCSNTTRTFLIDPSEEMVNNYVFLLDLQKHIIENELKAGRTGKEVYESVVEFIKKVRPELAGNFTKNIGSLIGLEFRDSFFVLNSKNDKRKIQVGDCFNISFGFNALKDMKTNTNYALQLADTVILNEDGPKILTEYTKSKSQVSFYFNNDEVEKEKKPAASTKIPTNLDGNSKILRSKLRGDARGESQDAQKEQIRKENQRKLHEKLQKEGLLRFTAEDATTEGSETRQYFKKYESYVRESQIPNNVRDLRIHVDWRSQTIIVPIYGRPVPFHINSYKNGSKNEEGEYTYLRLNFHSPGSAGGISKNVVELPYDDSPDNQFMRSITLRSKDGDRMSETFKQITDLKKESTKREQERKALADVVQQDKLIENKTGRTKRLDQIFVRPSPDTKRVPSTVFIHENGIRYQSPLRTDSRIDILFSNIKNLIFQSCKGELIVIIHIHLKNPIMMGKKKIQDVQFYREASDVSVDETGTGRRNQNKFRKYGDEDELEQEQEERRKRAMLDKEFKYFADAIAEASNGLVSVESTFRDLGFQGVPNRSAVFCMPTTDCLVQLIEPPFLVVNLEEIEVAILERVQFGLKNFDLVFVYKDFKKPVTHINTIPIESLDFLKQWLTDMDIPYAISTINLKWSTIMQSLQEDPHQFFLDGGWSFLNANSDEEGSDESEEEISEYEASEEEPEDESAYSDEDDYSEDISDGSYSGADSEEEEGEDWDELEKKAAKADRTAGLRD</sequence>
<gene>
    <name type="primary">SPT16</name>
    <name type="ordered locus">CAGL0C03047g</name>
</gene>